<dbReference type="EC" id="3.5.1.5" evidence="1"/>
<dbReference type="EMBL" id="AM286690">
    <property type="protein sequence ID" value="CAL18169.1"/>
    <property type="molecule type" value="Genomic_DNA"/>
</dbReference>
<dbReference type="RefSeq" id="WP_011589992.1">
    <property type="nucleotide sequence ID" value="NC_008260.1"/>
</dbReference>
<dbReference type="SMR" id="Q0VKX9"/>
<dbReference type="STRING" id="393595.ABO_2721"/>
<dbReference type="KEGG" id="abo:ABO_2721"/>
<dbReference type="eggNOG" id="COG0831">
    <property type="taxonomic scope" value="Bacteria"/>
</dbReference>
<dbReference type="HOGENOM" id="CLU_145825_1_0_6"/>
<dbReference type="OrthoDB" id="9797217at2"/>
<dbReference type="UniPathway" id="UPA00258">
    <property type="reaction ID" value="UER00370"/>
</dbReference>
<dbReference type="Proteomes" id="UP000008871">
    <property type="component" value="Chromosome"/>
</dbReference>
<dbReference type="GO" id="GO:0005737">
    <property type="term" value="C:cytoplasm"/>
    <property type="evidence" value="ECO:0007669"/>
    <property type="project" value="UniProtKB-SubCell"/>
</dbReference>
<dbReference type="GO" id="GO:0016151">
    <property type="term" value="F:nickel cation binding"/>
    <property type="evidence" value="ECO:0007669"/>
    <property type="project" value="InterPro"/>
</dbReference>
<dbReference type="GO" id="GO:0009039">
    <property type="term" value="F:urease activity"/>
    <property type="evidence" value="ECO:0007669"/>
    <property type="project" value="UniProtKB-UniRule"/>
</dbReference>
<dbReference type="GO" id="GO:0043419">
    <property type="term" value="P:urea catabolic process"/>
    <property type="evidence" value="ECO:0007669"/>
    <property type="project" value="UniProtKB-UniRule"/>
</dbReference>
<dbReference type="CDD" id="cd00390">
    <property type="entry name" value="Urease_gamma"/>
    <property type="match status" value="1"/>
</dbReference>
<dbReference type="Gene3D" id="3.30.280.10">
    <property type="entry name" value="Urease, gamma-like subunit"/>
    <property type="match status" value="1"/>
</dbReference>
<dbReference type="HAMAP" id="MF_00739">
    <property type="entry name" value="Urease_gamma"/>
    <property type="match status" value="1"/>
</dbReference>
<dbReference type="InterPro" id="IPR012010">
    <property type="entry name" value="Urease_gamma"/>
</dbReference>
<dbReference type="InterPro" id="IPR002026">
    <property type="entry name" value="Urease_gamma/gamma-beta_su"/>
</dbReference>
<dbReference type="InterPro" id="IPR036463">
    <property type="entry name" value="Urease_gamma_sf"/>
</dbReference>
<dbReference type="InterPro" id="IPR050069">
    <property type="entry name" value="Urease_subunit"/>
</dbReference>
<dbReference type="NCBIfam" id="NF009712">
    <property type="entry name" value="PRK13241.1"/>
    <property type="match status" value="1"/>
</dbReference>
<dbReference type="NCBIfam" id="TIGR00193">
    <property type="entry name" value="urease_gam"/>
    <property type="match status" value="1"/>
</dbReference>
<dbReference type="PANTHER" id="PTHR33569">
    <property type="entry name" value="UREASE"/>
    <property type="match status" value="1"/>
</dbReference>
<dbReference type="PANTHER" id="PTHR33569:SF1">
    <property type="entry name" value="UREASE"/>
    <property type="match status" value="1"/>
</dbReference>
<dbReference type="Pfam" id="PF00547">
    <property type="entry name" value="Urease_gamma"/>
    <property type="match status" value="1"/>
</dbReference>
<dbReference type="PIRSF" id="PIRSF001223">
    <property type="entry name" value="Urease_gamma"/>
    <property type="match status" value="1"/>
</dbReference>
<dbReference type="SUPFAM" id="SSF54111">
    <property type="entry name" value="Urease, gamma-subunit"/>
    <property type="match status" value="1"/>
</dbReference>
<evidence type="ECO:0000255" key="1">
    <source>
        <dbReference type="HAMAP-Rule" id="MF_00739"/>
    </source>
</evidence>
<accession>Q0VKX9</accession>
<feature type="chain" id="PRO_1000046307" description="Urease subunit gamma">
    <location>
        <begin position="1"/>
        <end position="100"/>
    </location>
</feature>
<reference key="1">
    <citation type="journal article" date="2006" name="Nat. Biotechnol.">
        <title>Genome sequence of the ubiquitous hydrocarbon-degrading marine bacterium Alcanivorax borkumensis.</title>
        <authorList>
            <person name="Schneiker S."/>
            <person name="Martins dos Santos V.A.P."/>
            <person name="Bartels D."/>
            <person name="Bekel T."/>
            <person name="Brecht M."/>
            <person name="Buhrmester J."/>
            <person name="Chernikova T.N."/>
            <person name="Denaro R."/>
            <person name="Ferrer M."/>
            <person name="Gertler C."/>
            <person name="Goesmann A."/>
            <person name="Golyshina O.V."/>
            <person name="Kaminski F."/>
            <person name="Khachane A.N."/>
            <person name="Lang S."/>
            <person name="Linke B."/>
            <person name="McHardy A.C."/>
            <person name="Meyer F."/>
            <person name="Nechitaylo T."/>
            <person name="Puehler A."/>
            <person name="Regenhardt D."/>
            <person name="Rupp O."/>
            <person name="Sabirova J.S."/>
            <person name="Selbitschka W."/>
            <person name="Yakimov M.M."/>
            <person name="Timmis K.N."/>
            <person name="Vorhoelter F.-J."/>
            <person name="Weidner S."/>
            <person name="Kaiser O."/>
            <person name="Golyshin P.N."/>
        </authorList>
    </citation>
    <scope>NUCLEOTIDE SEQUENCE [LARGE SCALE GENOMIC DNA]</scope>
    <source>
        <strain>ATCC 700651 / DSM 11573 / NCIMB 13689 / SK2</strain>
    </source>
</reference>
<proteinExistence type="inferred from homology"/>
<protein>
    <recommendedName>
        <fullName evidence="1">Urease subunit gamma</fullName>
        <ecNumber evidence="1">3.5.1.5</ecNumber>
    </recommendedName>
    <alternativeName>
        <fullName evidence="1">Urea amidohydrolase subunit gamma</fullName>
    </alternativeName>
</protein>
<sequence length="100" mass="11150">MELTPREKDKLLIFTAALLAERRKARGVKLNYPESIAYITATIMEGARDGKTVAELMGEGRTLLKRQDVMEGVPEMIHEVQVEATFPDGTKLVTVHDPIV</sequence>
<organism>
    <name type="scientific">Alcanivorax borkumensis (strain ATCC 700651 / DSM 11573 / NCIMB 13689 / SK2)</name>
    <dbReference type="NCBI Taxonomy" id="393595"/>
    <lineage>
        <taxon>Bacteria</taxon>
        <taxon>Pseudomonadati</taxon>
        <taxon>Pseudomonadota</taxon>
        <taxon>Gammaproteobacteria</taxon>
        <taxon>Oceanospirillales</taxon>
        <taxon>Alcanivoracaceae</taxon>
        <taxon>Alcanivorax</taxon>
    </lineage>
</organism>
<comment type="catalytic activity">
    <reaction evidence="1">
        <text>urea + 2 H2O + H(+) = hydrogencarbonate + 2 NH4(+)</text>
        <dbReference type="Rhea" id="RHEA:20557"/>
        <dbReference type="ChEBI" id="CHEBI:15377"/>
        <dbReference type="ChEBI" id="CHEBI:15378"/>
        <dbReference type="ChEBI" id="CHEBI:16199"/>
        <dbReference type="ChEBI" id="CHEBI:17544"/>
        <dbReference type="ChEBI" id="CHEBI:28938"/>
        <dbReference type="EC" id="3.5.1.5"/>
    </reaction>
</comment>
<comment type="pathway">
    <text evidence="1">Nitrogen metabolism; urea degradation; CO(2) and NH(3) from urea (urease route): step 1/1.</text>
</comment>
<comment type="subunit">
    <text evidence="1">Heterotrimer of UreA (gamma), UreB (beta) and UreC (alpha) subunits. Three heterotrimers associate to form the active enzyme.</text>
</comment>
<comment type="subcellular location">
    <subcellularLocation>
        <location evidence="1">Cytoplasm</location>
    </subcellularLocation>
</comment>
<comment type="similarity">
    <text evidence="1">Belongs to the urease gamma subunit family.</text>
</comment>
<gene>
    <name evidence="1" type="primary">ureA</name>
    <name type="ordered locus">ABO_2721</name>
</gene>
<keyword id="KW-0963">Cytoplasm</keyword>
<keyword id="KW-0378">Hydrolase</keyword>
<keyword id="KW-1185">Reference proteome</keyword>
<name>URE3_ALCBS</name>